<gene>
    <name evidence="1" type="primary">ligA</name>
    <name type="ordered locus">RPC_3294</name>
</gene>
<name>DNLJ_RHOPB</name>
<proteinExistence type="inferred from homology"/>
<protein>
    <recommendedName>
        <fullName evidence="1">DNA ligase</fullName>
        <ecNumber evidence="1">6.5.1.2</ecNumber>
    </recommendedName>
    <alternativeName>
        <fullName evidence="1">Polydeoxyribonucleotide synthase [NAD(+)]</fullName>
    </alternativeName>
</protein>
<feature type="chain" id="PRO_0000313402" description="DNA ligase">
    <location>
        <begin position="1"/>
        <end position="795"/>
    </location>
</feature>
<feature type="domain" description="BRCT" evidence="1">
    <location>
        <begin position="716"/>
        <end position="795"/>
    </location>
</feature>
<feature type="active site" description="N6-AMP-lysine intermediate" evidence="1">
    <location>
        <position position="133"/>
    </location>
</feature>
<feature type="binding site" evidence="1">
    <location>
        <begin position="48"/>
        <end position="52"/>
    </location>
    <ligand>
        <name>NAD(+)</name>
        <dbReference type="ChEBI" id="CHEBI:57540"/>
    </ligand>
</feature>
<feature type="binding site" evidence="1">
    <location>
        <begin position="97"/>
        <end position="98"/>
    </location>
    <ligand>
        <name>NAD(+)</name>
        <dbReference type="ChEBI" id="CHEBI:57540"/>
    </ligand>
</feature>
<feature type="binding site" evidence="1">
    <location>
        <position position="131"/>
    </location>
    <ligand>
        <name>NAD(+)</name>
        <dbReference type="ChEBI" id="CHEBI:57540"/>
    </ligand>
</feature>
<feature type="binding site" evidence="1">
    <location>
        <position position="154"/>
    </location>
    <ligand>
        <name>NAD(+)</name>
        <dbReference type="ChEBI" id="CHEBI:57540"/>
    </ligand>
</feature>
<feature type="binding site" evidence="1">
    <location>
        <position position="191"/>
    </location>
    <ligand>
        <name>NAD(+)</name>
        <dbReference type="ChEBI" id="CHEBI:57540"/>
    </ligand>
</feature>
<feature type="binding site" evidence="1">
    <location>
        <position position="307"/>
    </location>
    <ligand>
        <name>NAD(+)</name>
        <dbReference type="ChEBI" id="CHEBI:57540"/>
    </ligand>
</feature>
<feature type="binding site" evidence="1">
    <location>
        <position position="331"/>
    </location>
    <ligand>
        <name>NAD(+)</name>
        <dbReference type="ChEBI" id="CHEBI:57540"/>
    </ligand>
</feature>
<feature type="binding site" evidence="1">
    <location>
        <position position="425"/>
    </location>
    <ligand>
        <name>Zn(2+)</name>
        <dbReference type="ChEBI" id="CHEBI:29105"/>
    </ligand>
</feature>
<feature type="binding site" evidence="1">
    <location>
        <position position="428"/>
    </location>
    <ligand>
        <name>Zn(2+)</name>
        <dbReference type="ChEBI" id="CHEBI:29105"/>
    </ligand>
</feature>
<feature type="binding site" evidence="1">
    <location>
        <position position="445"/>
    </location>
    <ligand>
        <name>Zn(2+)</name>
        <dbReference type="ChEBI" id="CHEBI:29105"/>
    </ligand>
</feature>
<feature type="binding site" evidence="1">
    <location>
        <position position="451"/>
    </location>
    <ligand>
        <name>Zn(2+)</name>
        <dbReference type="ChEBI" id="CHEBI:29105"/>
    </ligand>
</feature>
<accession>Q211V0</accession>
<reference key="1">
    <citation type="submission" date="2006-03" db="EMBL/GenBank/DDBJ databases">
        <title>Complete sequence of Rhodopseudomonas palustris BisB18.</title>
        <authorList>
            <consortium name="US DOE Joint Genome Institute"/>
            <person name="Copeland A."/>
            <person name="Lucas S."/>
            <person name="Lapidus A."/>
            <person name="Barry K."/>
            <person name="Detter J.C."/>
            <person name="Glavina del Rio T."/>
            <person name="Hammon N."/>
            <person name="Israni S."/>
            <person name="Dalin E."/>
            <person name="Tice H."/>
            <person name="Pitluck S."/>
            <person name="Chain P."/>
            <person name="Malfatti S."/>
            <person name="Shin M."/>
            <person name="Vergez L."/>
            <person name="Schmutz J."/>
            <person name="Larimer F."/>
            <person name="Land M."/>
            <person name="Hauser L."/>
            <person name="Pelletier D.A."/>
            <person name="Kyrpides N."/>
            <person name="Anderson I."/>
            <person name="Oda Y."/>
            <person name="Harwood C.S."/>
            <person name="Richardson P."/>
        </authorList>
    </citation>
    <scope>NUCLEOTIDE SEQUENCE [LARGE SCALE GENOMIC DNA]</scope>
    <source>
        <strain>BisB18</strain>
    </source>
</reference>
<evidence type="ECO:0000255" key="1">
    <source>
        <dbReference type="HAMAP-Rule" id="MF_01588"/>
    </source>
</evidence>
<comment type="function">
    <text evidence="1">DNA ligase that catalyzes the formation of phosphodiester linkages between 5'-phosphoryl and 3'-hydroxyl groups in double-stranded DNA using NAD as a coenzyme and as the energy source for the reaction. It is essential for DNA replication and repair of damaged DNA.</text>
</comment>
<comment type="catalytic activity">
    <reaction evidence="1">
        <text>NAD(+) + (deoxyribonucleotide)n-3'-hydroxyl + 5'-phospho-(deoxyribonucleotide)m = (deoxyribonucleotide)n+m + AMP + beta-nicotinamide D-nucleotide.</text>
        <dbReference type="EC" id="6.5.1.2"/>
    </reaction>
</comment>
<comment type="cofactor">
    <cofactor evidence="1">
        <name>Mg(2+)</name>
        <dbReference type="ChEBI" id="CHEBI:18420"/>
    </cofactor>
    <cofactor evidence="1">
        <name>Mn(2+)</name>
        <dbReference type="ChEBI" id="CHEBI:29035"/>
    </cofactor>
</comment>
<comment type="similarity">
    <text evidence="1">Belongs to the NAD-dependent DNA ligase family. LigA subfamily.</text>
</comment>
<organism>
    <name type="scientific">Rhodopseudomonas palustris (strain BisB18)</name>
    <dbReference type="NCBI Taxonomy" id="316056"/>
    <lineage>
        <taxon>Bacteria</taxon>
        <taxon>Pseudomonadati</taxon>
        <taxon>Pseudomonadota</taxon>
        <taxon>Alphaproteobacteria</taxon>
        <taxon>Hyphomicrobiales</taxon>
        <taxon>Nitrobacteraceae</taxon>
        <taxon>Rhodopseudomonas</taxon>
    </lineage>
</organism>
<sequence length="795" mass="87066">MTAKPKTAPTDLDTLSKAKAKVELKRLSLEIERHNNAYYQDDAPKISDAEYDALRHRVEAIEAKFPELVSSDSPTQKVGAAPARGFAKVQHAVPMLSLGNAFSDDEVAEFLTRVRRFLKLDAEQIPAIVAEPKIDGLSLSLRYEHGKLVRAATRGDGFTGEDVTANVRTIKDIPHALAVAEPPAACELRGEVYMLKSDFLALNQRQETAGEPPFANPRNSAAGSLRQKDVAITASRPLKFFAYAWGEFSDLPEATQYGMLGWLKRAGFTVNPLITLCKSVDDALAFYRKIGEERATLPYDIDGVVYKVDRLDWQERLGFAGRAPRWAIAHKFAAEQATTILNGIEIQVGRTGALTPVARLAPVTVGGVVVQNATLHNEDYIKSLDIHIGDTVVVQRAGDVIPQIVSVVRDKRPEDAEPYEFPKFCPACGSHAVRDEDEGEAVRRCTGGLICPAQAIERLRHFVSRGAFDIAGFGETYVELLYEEGLVRNPADIFALHSKVDELKAALFRKRESLATQREEKTGKKRKSSLSEEKRQYTDVENLLAAIDARRTVAFNRFIFGLGIRHVGEVTSKALVRHFADVKAFLDGVDAAALARPGPAWLDLKNVRYIGEITLERLLEIQGGADTNEERQGFQPDARQRASLLSHYGNEEKIAGALQAARSEAPGPAFQQLANDSEIGEVATQSLIDFFEETNNRQVVTALMDQVQVERPAAASAKSPISGKIVVFTGALERTTRDEAKAIAERLGAKVASSVSSKTDLVVAGPSAGSKLRDAQKFGVKVLTEEEWAEISGNE</sequence>
<keyword id="KW-0227">DNA damage</keyword>
<keyword id="KW-0234">DNA repair</keyword>
<keyword id="KW-0235">DNA replication</keyword>
<keyword id="KW-0436">Ligase</keyword>
<keyword id="KW-0460">Magnesium</keyword>
<keyword id="KW-0464">Manganese</keyword>
<keyword id="KW-0479">Metal-binding</keyword>
<keyword id="KW-0520">NAD</keyword>
<keyword id="KW-0862">Zinc</keyword>
<dbReference type="EC" id="6.5.1.2" evidence="1"/>
<dbReference type="EMBL" id="CP000301">
    <property type="protein sequence ID" value="ABD88836.1"/>
    <property type="molecule type" value="Genomic_DNA"/>
</dbReference>
<dbReference type="SMR" id="Q211V0"/>
<dbReference type="STRING" id="316056.RPC_3294"/>
<dbReference type="KEGG" id="rpc:RPC_3294"/>
<dbReference type="eggNOG" id="COG0272">
    <property type="taxonomic scope" value="Bacteria"/>
</dbReference>
<dbReference type="HOGENOM" id="CLU_007764_2_1_5"/>
<dbReference type="OrthoDB" id="9759736at2"/>
<dbReference type="GO" id="GO:0005829">
    <property type="term" value="C:cytosol"/>
    <property type="evidence" value="ECO:0007669"/>
    <property type="project" value="TreeGrafter"/>
</dbReference>
<dbReference type="GO" id="GO:0003911">
    <property type="term" value="F:DNA ligase (NAD+) activity"/>
    <property type="evidence" value="ECO:0007669"/>
    <property type="project" value="UniProtKB-UniRule"/>
</dbReference>
<dbReference type="GO" id="GO:0046872">
    <property type="term" value="F:metal ion binding"/>
    <property type="evidence" value="ECO:0007669"/>
    <property type="project" value="UniProtKB-KW"/>
</dbReference>
<dbReference type="GO" id="GO:0006281">
    <property type="term" value="P:DNA repair"/>
    <property type="evidence" value="ECO:0007669"/>
    <property type="project" value="UniProtKB-KW"/>
</dbReference>
<dbReference type="GO" id="GO:0006260">
    <property type="term" value="P:DNA replication"/>
    <property type="evidence" value="ECO:0007669"/>
    <property type="project" value="UniProtKB-KW"/>
</dbReference>
<dbReference type="CDD" id="cd17748">
    <property type="entry name" value="BRCT_DNA_ligase_like"/>
    <property type="match status" value="1"/>
</dbReference>
<dbReference type="CDD" id="cd00114">
    <property type="entry name" value="LIGANc"/>
    <property type="match status" value="1"/>
</dbReference>
<dbReference type="FunFam" id="2.40.50.140:FF:000012">
    <property type="entry name" value="DNA ligase"/>
    <property type="match status" value="1"/>
</dbReference>
<dbReference type="FunFam" id="3.30.470.30:FF:000001">
    <property type="entry name" value="DNA ligase"/>
    <property type="match status" value="1"/>
</dbReference>
<dbReference type="Gene3D" id="6.20.10.30">
    <property type="match status" value="1"/>
</dbReference>
<dbReference type="Gene3D" id="1.10.150.20">
    <property type="entry name" value="5' to 3' exonuclease, C-terminal subdomain"/>
    <property type="match status" value="3"/>
</dbReference>
<dbReference type="Gene3D" id="3.40.50.10190">
    <property type="entry name" value="BRCT domain"/>
    <property type="match status" value="1"/>
</dbReference>
<dbReference type="Gene3D" id="3.30.470.30">
    <property type="entry name" value="DNA ligase/mRNA capping enzyme"/>
    <property type="match status" value="1"/>
</dbReference>
<dbReference type="Gene3D" id="1.10.287.610">
    <property type="entry name" value="Helix hairpin bin"/>
    <property type="match status" value="1"/>
</dbReference>
<dbReference type="Gene3D" id="2.40.50.140">
    <property type="entry name" value="Nucleic acid-binding proteins"/>
    <property type="match status" value="1"/>
</dbReference>
<dbReference type="HAMAP" id="MF_01588">
    <property type="entry name" value="DNA_ligase_A"/>
    <property type="match status" value="1"/>
</dbReference>
<dbReference type="InterPro" id="IPR001357">
    <property type="entry name" value="BRCT_dom"/>
</dbReference>
<dbReference type="InterPro" id="IPR036420">
    <property type="entry name" value="BRCT_dom_sf"/>
</dbReference>
<dbReference type="InterPro" id="IPR041663">
    <property type="entry name" value="DisA/LigA_HHH"/>
</dbReference>
<dbReference type="InterPro" id="IPR001679">
    <property type="entry name" value="DNA_ligase"/>
</dbReference>
<dbReference type="InterPro" id="IPR018239">
    <property type="entry name" value="DNA_ligase_AS"/>
</dbReference>
<dbReference type="InterPro" id="IPR033136">
    <property type="entry name" value="DNA_ligase_CS"/>
</dbReference>
<dbReference type="InterPro" id="IPR013839">
    <property type="entry name" value="DNAligase_adenylation"/>
</dbReference>
<dbReference type="InterPro" id="IPR013840">
    <property type="entry name" value="DNAligase_N"/>
</dbReference>
<dbReference type="InterPro" id="IPR012340">
    <property type="entry name" value="NA-bd_OB-fold"/>
</dbReference>
<dbReference type="InterPro" id="IPR004150">
    <property type="entry name" value="NAD_DNA_ligase_OB"/>
</dbReference>
<dbReference type="InterPro" id="IPR010994">
    <property type="entry name" value="RuvA_2-like"/>
</dbReference>
<dbReference type="InterPro" id="IPR004149">
    <property type="entry name" value="Znf_DNAligase_C4"/>
</dbReference>
<dbReference type="NCBIfam" id="TIGR00575">
    <property type="entry name" value="dnlj"/>
    <property type="match status" value="1"/>
</dbReference>
<dbReference type="NCBIfam" id="NF005932">
    <property type="entry name" value="PRK07956.1"/>
    <property type="match status" value="1"/>
</dbReference>
<dbReference type="PANTHER" id="PTHR23389">
    <property type="entry name" value="CHROMOSOME TRANSMISSION FIDELITY FACTOR 18"/>
    <property type="match status" value="1"/>
</dbReference>
<dbReference type="PANTHER" id="PTHR23389:SF9">
    <property type="entry name" value="DNA LIGASE"/>
    <property type="match status" value="1"/>
</dbReference>
<dbReference type="Pfam" id="PF00533">
    <property type="entry name" value="BRCT"/>
    <property type="match status" value="1"/>
</dbReference>
<dbReference type="Pfam" id="PF01653">
    <property type="entry name" value="DNA_ligase_aden"/>
    <property type="match status" value="1"/>
</dbReference>
<dbReference type="Pfam" id="PF03120">
    <property type="entry name" value="DNA_ligase_OB"/>
    <property type="match status" value="1"/>
</dbReference>
<dbReference type="Pfam" id="PF03119">
    <property type="entry name" value="DNA_ligase_ZBD"/>
    <property type="match status" value="1"/>
</dbReference>
<dbReference type="Pfam" id="PF12826">
    <property type="entry name" value="HHH_2"/>
    <property type="match status" value="1"/>
</dbReference>
<dbReference type="PIRSF" id="PIRSF001604">
    <property type="entry name" value="LigA"/>
    <property type="match status" value="1"/>
</dbReference>
<dbReference type="SMART" id="SM00292">
    <property type="entry name" value="BRCT"/>
    <property type="match status" value="1"/>
</dbReference>
<dbReference type="SMART" id="SM00532">
    <property type="entry name" value="LIGANc"/>
    <property type="match status" value="1"/>
</dbReference>
<dbReference type="SUPFAM" id="SSF52113">
    <property type="entry name" value="BRCT domain"/>
    <property type="match status" value="1"/>
</dbReference>
<dbReference type="SUPFAM" id="SSF56091">
    <property type="entry name" value="DNA ligase/mRNA capping enzyme, catalytic domain"/>
    <property type="match status" value="1"/>
</dbReference>
<dbReference type="SUPFAM" id="SSF50249">
    <property type="entry name" value="Nucleic acid-binding proteins"/>
    <property type="match status" value="1"/>
</dbReference>
<dbReference type="SUPFAM" id="SSF47781">
    <property type="entry name" value="RuvA domain 2-like"/>
    <property type="match status" value="1"/>
</dbReference>
<dbReference type="PROSITE" id="PS50172">
    <property type="entry name" value="BRCT"/>
    <property type="match status" value="1"/>
</dbReference>
<dbReference type="PROSITE" id="PS01055">
    <property type="entry name" value="DNA_LIGASE_N1"/>
    <property type="match status" value="1"/>
</dbReference>
<dbReference type="PROSITE" id="PS01056">
    <property type="entry name" value="DNA_LIGASE_N2"/>
    <property type="match status" value="1"/>
</dbReference>